<comment type="function">
    <text evidence="1">One of several proteins that assist in the late maturation steps of the functional core of the 30S ribosomal subunit. Helps release RbfA from mature subunits. May play a role in the assembly of ribosomal proteins into the subunit. Circularly permuted GTPase that catalyzes slow GTP hydrolysis, GTPase activity is stimulated by the 30S ribosomal subunit.</text>
</comment>
<comment type="cofactor">
    <cofactor evidence="1">
        <name>Zn(2+)</name>
        <dbReference type="ChEBI" id="CHEBI:29105"/>
    </cofactor>
    <text evidence="1">Binds 1 zinc ion per subunit.</text>
</comment>
<comment type="subunit">
    <text evidence="1">Monomer. Associates with 30S ribosomal subunit, binds 16S rRNA.</text>
</comment>
<comment type="subcellular location">
    <subcellularLocation>
        <location evidence="1">Cytoplasm</location>
    </subcellularLocation>
</comment>
<comment type="similarity">
    <text evidence="1">Belongs to the TRAFAC class YlqF/YawG GTPase family. RsgA subfamily.</text>
</comment>
<proteinExistence type="inferred from homology"/>
<gene>
    <name evidence="1" type="primary">rsgA</name>
    <name type="ordered locus">PMI3356</name>
</gene>
<organism>
    <name type="scientific">Proteus mirabilis (strain HI4320)</name>
    <dbReference type="NCBI Taxonomy" id="529507"/>
    <lineage>
        <taxon>Bacteria</taxon>
        <taxon>Pseudomonadati</taxon>
        <taxon>Pseudomonadota</taxon>
        <taxon>Gammaproteobacteria</taxon>
        <taxon>Enterobacterales</taxon>
        <taxon>Morganellaceae</taxon>
        <taxon>Proteus</taxon>
    </lineage>
</organism>
<reference key="1">
    <citation type="journal article" date="2008" name="J. Bacteriol.">
        <title>Complete genome sequence of uropathogenic Proteus mirabilis, a master of both adherence and motility.</title>
        <authorList>
            <person name="Pearson M.M."/>
            <person name="Sebaihia M."/>
            <person name="Churcher C."/>
            <person name="Quail M.A."/>
            <person name="Seshasayee A.S."/>
            <person name="Luscombe N.M."/>
            <person name="Abdellah Z."/>
            <person name="Arrosmith C."/>
            <person name="Atkin B."/>
            <person name="Chillingworth T."/>
            <person name="Hauser H."/>
            <person name="Jagels K."/>
            <person name="Moule S."/>
            <person name="Mungall K."/>
            <person name="Norbertczak H."/>
            <person name="Rabbinowitsch E."/>
            <person name="Walker D."/>
            <person name="Whithead S."/>
            <person name="Thomson N.R."/>
            <person name="Rather P.N."/>
            <person name="Parkhill J."/>
            <person name="Mobley H.L.T."/>
        </authorList>
    </citation>
    <scope>NUCLEOTIDE SEQUENCE [LARGE SCALE GENOMIC DNA]</scope>
    <source>
        <strain>HI4320</strain>
    </source>
</reference>
<name>RSGA_PROMH</name>
<accession>B4F1Z6</accession>
<protein>
    <recommendedName>
        <fullName evidence="1">Small ribosomal subunit biogenesis GTPase RsgA</fullName>
        <ecNumber evidence="1">3.6.1.-</ecNumber>
    </recommendedName>
</protein>
<sequence>MTKRKLSKGQQRRVQENHKKRLQSKEKKNHVELDDTQLGEATEGLVISRFGQHADIEAADGSITRCNIRRTISSLVTGDRVVWRPALQTQENVRVNGIVEAVHERTSVLTRPDYYDGIKPIAANIDQIIIVSAILPELSLNIIDRYLVACETLNIEPLIVLNKVDMLDAESRAMVSEWMQIYKDIGYRVLEVSSYTKEGLEALTQALIGRISIFAGQSGVGKSSLLNTLLPPMEESILVNQVSDNSGLGQHTTTASRLYHFPLGGDVIDSPGVREFGLWHLTPEQVTKGFIEFRPFLGGCKFRDCKHNDDPGCLITEAVDKGEIAPTRFENYHRILESMSQVKVRKNINLDS</sequence>
<evidence type="ECO:0000255" key="1">
    <source>
        <dbReference type="HAMAP-Rule" id="MF_01820"/>
    </source>
</evidence>
<evidence type="ECO:0000255" key="2">
    <source>
        <dbReference type="PROSITE-ProRule" id="PRU01058"/>
    </source>
</evidence>
<evidence type="ECO:0000256" key="3">
    <source>
        <dbReference type="SAM" id="MobiDB-lite"/>
    </source>
</evidence>
<keyword id="KW-0963">Cytoplasm</keyword>
<keyword id="KW-0342">GTP-binding</keyword>
<keyword id="KW-0378">Hydrolase</keyword>
<keyword id="KW-0479">Metal-binding</keyword>
<keyword id="KW-0547">Nucleotide-binding</keyword>
<keyword id="KW-1185">Reference proteome</keyword>
<keyword id="KW-0690">Ribosome biogenesis</keyword>
<keyword id="KW-0694">RNA-binding</keyword>
<keyword id="KW-0699">rRNA-binding</keyword>
<keyword id="KW-0862">Zinc</keyword>
<feature type="chain" id="PRO_1000188117" description="Small ribosomal subunit biogenesis GTPase RsgA">
    <location>
        <begin position="1"/>
        <end position="352"/>
    </location>
</feature>
<feature type="domain" description="CP-type G" evidence="2">
    <location>
        <begin position="114"/>
        <end position="276"/>
    </location>
</feature>
<feature type="region of interest" description="Disordered" evidence="3">
    <location>
        <begin position="1"/>
        <end position="35"/>
    </location>
</feature>
<feature type="compositionally biased region" description="Basic residues" evidence="3">
    <location>
        <begin position="1"/>
        <end position="11"/>
    </location>
</feature>
<feature type="compositionally biased region" description="Basic and acidic residues" evidence="3">
    <location>
        <begin position="13"/>
        <end position="33"/>
    </location>
</feature>
<feature type="binding site" evidence="1">
    <location>
        <begin position="162"/>
        <end position="165"/>
    </location>
    <ligand>
        <name>GTP</name>
        <dbReference type="ChEBI" id="CHEBI:37565"/>
    </ligand>
</feature>
<feature type="binding site" evidence="1">
    <location>
        <begin position="216"/>
        <end position="224"/>
    </location>
    <ligand>
        <name>GTP</name>
        <dbReference type="ChEBI" id="CHEBI:37565"/>
    </ligand>
</feature>
<feature type="binding site" evidence="1">
    <location>
        <position position="300"/>
    </location>
    <ligand>
        <name>Zn(2+)</name>
        <dbReference type="ChEBI" id="CHEBI:29105"/>
    </ligand>
</feature>
<feature type="binding site" evidence="1">
    <location>
        <position position="305"/>
    </location>
    <ligand>
        <name>Zn(2+)</name>
        <dbReference type="ChEBI" id="CHEBI:29105"/>
    </ligand>
</feature>
<feature type="binding site" evidence="1">
    <location>
        <position position="307"/>
    </location>
    <ligand>
        <name>Zn(2+)</name>
        <dbReference type="ChEBI" id="CHEBI:29105"/>
    </ligand>
</feature>
<feature type="binding site" evidence="1">
    <location>
        <position position="313"/>
    </location>
    <ligand>
        <name>Zn(2+)</name>
        <dbReference type="ChEBI" id="CHEBI:29105"/>
    </ligand>
</feature>
<dbReference type="EC" id="3.6.1.-" evidence="1"/>
<dbReference type="EMBL" id="AM942759">
    <property type="protein sequence ID" value="CAR46588.1"/>
    <property type="molecule type" value="Genomic_DNA"/>
</dbReference>
<dbReference type="RefSeq" id="WP_004246308.1">
    <property type="nucleotide sequence ID" value="NC_010554.1"/>
</dbReference>
<dbReference type="SMR" id="B4F1Z6"/>
<dbReference type="EnsemblBacteria" id="CAR46588">
    <property type="protein sequence ID" value="CAR46588"/>
    <property type="gene ID" value="PMI3356"/>
</dbReference>
<dbReference type="GeneID" id="6802082"/>
<dbReference type="KEGG" id="pmr:PMI3356"/>
<dbReference type="eggNOG" id="COG1162">
    <property type="taxonomic scope" value="Bacteria"/>
</dbReference>
<dbReference type="HOGENOM" id="CLU_033617_2_0_6"/>
<dbReference type="Proteomes" id="UP000008319">
    <property type="component" value="Chromosome"/>
</dbReference>
<dbReference type="GO" id="GO:0005737">
    <property type="term" value="C:cytoplasm"/>
    <property type="evidence" value="ECO:0007669"/>
    <property type="project" value="UniProtKB-SubCell"/>
</dbReference>
<dbReference type="GO" id="GO:0005525">
    <property type="term" value="F:GTP binding"/>
    <property type="evidence" value="ECO:0007669"/>
    <property type="project" value="UniProtKB-UniRule"/>
</dbReference>
<dbReference type="GO" id="GO:0003924">
    <property type="term" value="F:GTPase activity"/>
    <property type="evidence" value="ECO:0007669"/>
    <property type="project" value="UniProtKB-UniRule"/>
</dbReference>
<dbReference type="GO" id="GO:0046872">
    <property type="term" value="F:metal ion binding"/>
    <property type="evidence" value="ECO:0007669"/>
    <property type="project" value="UniProtKB-KW"/>
</dbReference>
<dbReference type="GO" id="GO:0019843">
    <property type="term" value="F:rRNA binding"/>
    <property type="evidence" value="ECO:0007669"/>
    <property type="project" value="UniProtKB-KW"/>
</dbReference>
<dbReference type="GO" id="GO:0042274">
    <property type="term" value="P:ribosomal small subunit biogenesis"/>
    <property type="evidence" value="ECO:0007669"/>
    <property type="project" value="UniProtKB-UniRule"/>
</dbReference>
<dbReference type="CDD" id="cd01854">
    <property type="entry name" value="YjeQ_EngC"/>
    <property type="match status" value="1"/>
</dbReference>
<dbReference type="Gene3D" id="2.40.50.140">
    <property type="entry name" value="Nucleic acid-binding proteins"/>
    <property type="match status" value="1"/>
</dbReference>
<dbReference type="Gene3D" id="3.40.50.300">
    <property type="entry name" value="P-loop containing nucleotide triphosphate hydrolases"/>
    <property type="match status" value="1"/>
</dbReference>
<dbReference type="Gene3D" id="1.10.40.50">
    <property type="entry name" value="Probable gtpase engc, domain 3"/>
    <property type="match status" value="1"/>
</dbReference>
<dbReference type="HAMAP" id="MF_01820">
    <property type="entry name" value="GTPase_RsgA"/>
    <property type="match status" value="1"/>
</dbReference>
<dbReference type="InterPro" id="IPR030378">
    <property type="entry name" value="G_CP_dom"/>
</dbReference>
<dbReference type="InterPro" id="IPR012340">
    <property type="entry name" value="NA-bd_OB-fold"/>
</dbReference>
<dbReference type="InterPro" id="IPR027417">
    <property type="entry name" value="P-loop_NTPase"/>
</dbReference>
<dbReference type="InterPro" id="IPR004881">
    <property type="entry name" value="Ribosome_biogen_GTPase_RsgA"/>
</dbReference>
<dbReference type="InterPro" id="IPR010914">
    <property type="entry name" value="RsgA_GTPase_dom"/>
</dbReference>
<dbReference type="NCBIfam" id="NF008931">
    <property type="entry name" value="PRK12288.1"/>
    <property type="match status" value="1"/>
</dbReference>
<dbReference type="NCBIfam" id="TIGR00157">
    <property type="entry name" value="ribosome small subunit-dependent GTPase A"/>
    <property type="match status" value="1"/>
</dbReference>
<dbReference type="PANTHER" id="PTHR32120">
    <property type="entry name" value="SMALL RIBOSOMAL SUBUNIT BIOGENESIS GTPASE RSGA"/>
    <property type="match status" value="1"/>
</dbReference>
<dbReference type="PANTHER" id="PTHR32120:SF11">
    <property type="entry name" value="SMALL RIBOSOMAL SUBUNIT BIOGENESIS GTPASE RSGA 1, MITOCHONDRIAL-RELATED"/>
    <property type="match status" value="1"/>
</dbReference>
<dbReference type="Pfam" id="PF03193">
    <property type="entry name" value="RsgA_GTPase"/>
    <property type="match status" value="1"/>
</dbReference>
<dbReference type="SUPFAM" id="SSF52540">
    <property type="entry name" value="P-loop containing nucleoside triphosphate hydrolases"/>
    <property type="match status" value="1"/>
</dbReference>
<dbReference type="PROSITE" id="PS50936">
    <property type="entry name" value="ENGC_GTPASE"/>
    <property type="match status" value="1"/>
</dbReference>
<dbReference type="PROSITE" id="PS51721">
    <property type="entry name" value="G_CP"/>
    <property type="match status" value="1"/>
</dbReference>